<protein>
    <recommendedName>
        <fullName>Guanine nucleotide exchange factor BopE</fullName>
    </recommendedName>
    <alternativeName>
        <fullName>Effector protein BopE</fullName>
    </alternativeName>
</protein>
<proteinExistence type="inferred from homology"/>
<keyword id="KW-0343">GTPase activation</keyword>
<keyword id="KW-0344">Guanine-nucleotide releasing factor</keyword>
<keyword id="KW-0964">Secreted</keyword>
<keyword id="KW-0843">Virulence</keyword>
<name>BOPE_BURP6</name>
<accession>A3NLC8</accession>
<sequence>MTYNPRIGGFTHVKQASFDVHVKRGEAQPRTSFAQQIKRIFSKIGETLGQLFRHRAPDSAPGRVRLQGVRYVGSYRPTGDAKQAIRHFVDEAVKQVAHARTPEIRQDAEFGRQVYEATLCAIFSEAKDRFCMDPATRAGNVRPAFIEALGDAARATGLPGADKQGVFTPSGAGTNPLYTEIRLRADTLMGAELAARPEYRELQPYARQQAIDLVANALPAERSNTLVEFRQTVQTLEATYRRAAQDASRDEKGATNAADGA</sequence>
<evidence type="ECO:0000250" key="1"/>
<evidence type="ECO:0000305" key="2"/>
<dbReference type="EMBL" id="CP000571">
    <property type="protein sequence ID" value="ABN85504.1"/>
    <property type="molecule type" value="Genomic_DNA"/>
</dbReference>
<dbReference type="RefSeq" id="WP_004528812.1">
    <property type="nucleotide sequence ID" value="NC_009075.1"/>
</dbReference>
<dbReference type="BMRB" id="A3NLC8"/>
<dbReference type="SMR" id="A3NLC8"/>
<dbReference type="KEGG" id="bpd:BURPS668_A2155"/>
<dbReference type="HOGENOM" id="CLU_1064256_0_0_4"/>
<dbReference type="GO" id="GO:0005576">
    <property type="term" value="C:extracellular region"/>
    <property type="evidence" value="ECO:0007669"/>
    <property type="project" value="UniProtKB-SubCell"/>
</dbReference>
<dbReference type="GO" id="GO:0005096">
    <property type="term" value="F:GTPase activator activity"/>
    <property type="evidence" value="ECO:0007669"/>
    <property type="project" value="UniProtKB-KW"/>
</dbReference>
<dbReference type="GO" id="GO:0005085">
    <property type="term" value="F:guanyl-nucleotide exchange factor activity"/>
    <property type="evidence" value="ECO:0007669"/>
    <property type="project" value="UniProtKB-KW"/>
</dbReference>
<dbReference type="GO" id="GO:0030036">
    <property type="term" value="P:actin cytoskeleton organization"/>
    <property type="evidence" value="ECO:0007669"/>
    <property type="project" value="InterPro"/>
</dbReference>
<dbReference type="Gene3D" id="1.10.4120.10">
    <property type="entry name" value="SopE-like, GEF domain"/>
    <property type="match status" value="1"/>
</dbReference>
<dbReference type="InterPro" id="IPR005414">
    <property type="entry name" value="SopE"/>
</dbReference>
<dbReference type="InterPro" id="IPR035949">
    <property type="entry name" value="SopE-like_GEF_dom_sf"/>
</dbReference>
<dbReference type="InterPro" id="IPR016019">
    <property type="entry name" value="SopE_GEF_dom"/>
</dbReference>
<dbReference type="NCBIfam" id="NF011808">
    <property type="entry name" value="PRK15278.1"/>
    <property type="match status" value="1"/>
</dbReference>
<dbReference type="Pfam" id="PF07487">
    <property type="entry name" value="SopE_GEF"/>
    <property type="match status" value="1"/>
</dbReference>
<dbReference type="PIRSF" id="PIRSF034781">
    <property type="entry name" value="SecIII_sopE"/>
    <property type="match status" value="1"/>
</dbReference>
<dbReference type="PRINTS" id="PR01593">
    <property type="entry name" value="SOPEPROTEIN"/>
</dbReference>
<dbReference type="SUPFAM" id="SSF81832">
    <property type="entry name" value="SopE-like GEF domain"/>
    <property type="match status" value="1"/>
</dbReference>
<organism>
    <name type="scientific">Burkholderia pseudomallei (strain 668)</name>
    <dbReference type="NCBI Taxonomy" id="320373"/>
    <lineage>
        <taxon>Bacteria</taxon>
        <taxon>Pseudomonadati</taxon>
        <taxon>Pseudomonadota</taxon>
        <taxon>Betaproteobacteria</taxon>
        <taxon>Burkholderiales</taxon>
        <taxon>Burkholderiaceae</taxon>
        <taxon>Burkholderia</taxon>
        <taxon>pseudomallei group</taxon>
    </lineage>
</organism>
<reference key="1">
    <citation type="journal article" date="2010" name="Genome Biol. Evol.">
        <title>Continuing evolution of Burkholderia mallei through genome reduction and large-scale rearrangements.</title>
        <authorList>
            <person name="Losada L."/>
            <person name="Ronning C.M."/>
            <person name="DeShazer D."/>
            <person name="Woods D."/>
            <person name="Fedorova N."/>
            <person name="Kim H.S."/>
            <person name="Shabalina S.A."/>
            <person name="Pearson T.R."/>
            <person name="Brinkac L."/>
            <person name="Tan P."/>
            <person name="Nandi T."/>
            <person name="Crabtree J."/>
            <person name="Badger J."/>
            <person name="Beckstrom-Sternberg S."/>
            <person name="Saqib M."/>
            <person name="Schutzer S.E."/>
            <person name="Keim P."/>
            <person name="Nierman W.C."/>
        </authorList>
    </citation>
    <scope>NUCLEOTIDE SEQUENCE [LARGE SCALE GENOMIC DNA]</scope>
    <source>
        <strain>668</strain>
    </source>
</reference>
<feature type="chain" id="PRO_0000344033" description="Guanine nucleotide exchange factor BopE">
    <location>
        <begin position="1"/>
        <end position="261"/>
    </location>
</feature>
<comment type="function">
    <text evidence="1">Activator for both CDC42 and RAC1 by directly interacting with these Rho GTPases and acting as a guanine nucleotide exchange factor (GEF). This activation results in actin cytoskeleton rearrangements and stimulates membrane ruffling, thus promoting bacterial entry into non-phagocytic cells (By similarity).</text>
</comment>
<comment type="subunit">
    <text evidence="1">Monomer. Interacts with human CDC42 (By similarity).</text>
</comment>
<comment type="subcellular location">
    <subcellularLocation>
        <location evidence="1">Secreted</location>
    </subcellularLocation>
    <text evidence="1">Secreted via the bsa type III secretion system.</text>
</comment>
<comment type="similarity">
    <text evidence="2">Belongs to the GEF (guanine exchange factor) SopE family.</text>
</comment>
<gene>
    <name type="primary">bopE</name>
    <name type="ordered locus">BURPS668_A2155</name>
</gene>